<name>POTA_HAEDU</name>
<sequence>MEKLEQKTIVELRNVTKSYGDKTILKDLNLTINDGEFLTILGPSGCGKTTALRLIAGFEDLTEGSIILDGQDVSNVSAEKRPVNTVFQSYALFPHMTIFENVAFGLRMQKVPNEQITPRVMEALRMVRLEDRAEQKPAQLSGGQQQRIAIARAVVNKPKVLLLDESLSALDYKLRKEMQNELKALQRQLGITFIFVTHDQEEALTMSDRIIVMNAGKVAQDGTPREIYEEPKNLFVARFIGEINVFDATVIERIDARNVKANVEGRICHIKVEDMQVVPNQKLKVLLRPEDIVIEELDEDQSSKAIIGHIIDRNYKGMTLESSVKLDHNGMNVLVSEFFNEDDPHIDHSVGQKVALTWHEGWEVVLNDEDC</sequence>
<dbReference type="EC" id="7.6.2.11" evidence="1"/>
<dbReference type="EMBL" id="AE017143">
    <property type="protein sequence ID" value="AAP95507.1"/>
    <property type="molecule type" value="Genomic_DNA"/>
</dbReference>
<dbReference type="RefSeq" id="WP_010944560.1">
    <property type="nucleotide sequence ID" value="NC_002940.2"/>
</dbReference>
<dbReference type="SMR" id="Q7VNG4"/>
<dbReference type="STRING" id="233412.HD_0572"/>
<dbReference type="KEGG" id="hdu:HD_0572"/>
<dbReference type="eggNOG" id="COG3842">
    <property type="taxonomic scope" value="Bacteria"/>
</dbReference>
<dbReference type="HOGENOM" id="CLU_000604_1_1_6"/>
<dbReference type="OrthoDB" id="9802264at2"/>
<dbReference type="Proteomes" id="UP000001022">
    <property type="component" value="Chromosome"/>
</dbReference>
<dbReference type="GO" id="GO:0043190">
    <property type="term" value="C:ATP-binding cassette (ABC) transporter complex"/>
    <property type="evidence" value="ECO:0007669"/>
    <property type="project" value="InterPro"/>
</dbReference>
<dbReference type="GO" id="GO:0015594">
    <property type="term" value="F:ABC-type putrescine transporter activity"/>
    <property type="evidence" value="ECO:0007669"/>
    <property type="project" value="InterPro"/>
</dbReference>
<dbReference type="GO" id="GO:0005524">
    <property type="term" value="F:ATP binding"/>
    <property type="evidence" value="ECO:0007669"/>
    <property type="project" value="UniProtKB-KW"/>
</dbReference>
<dbReference type="GO" id="GO:0016887">
    <property type="term" value="F:ATP hydrolysis activity"/>
    <property type="evidence" value="ECO:0007669"/>
    <property type="project" value="InterPro"/>
</dbReference>
<dbReference type="CDD" id="cd03300">
    <property type="entry name" value="ABC_PotA_N"/>
    <property type="match status" value="1"/>
</dbReference>
<dbReference type="FunFam" id="3.40.50.300:FF:000133">
    <property type="entry name" value="Spermidine/putrescine import ATP-binding protein PotA"/>
    <property type="match status" value="1"/>
</dbReference>
<dbReference type="Gene3D" id="2.40.50.100">
    <property type="match status" value="1"/>
</dbReference>
<dbReference type="Gene3D" id="3.40.50.300">
    <property type="entry name" value="P-loop containing nucleotide triphosphate hydrolases"/>
    <property type="match status" value="1"/>
</dbReference>
<dbReference type="InterPro" id="IPR003593">
    <property type="entry name" value="AAA+_ATPase"/>
</dbReference>
<dbReference type="InterPro" id="IPR050093">
    <property type="entry name" value="ABC_SmlMolc_Importer"/>
</dbReference>
<dbReference type="InterPro" id="IPR003439">
    <property type="entry name" value="ABC_transporter-like_ATP-bd"/>
</dbReference>
<dbReference type="InterPro" id="IPR017871">
    <property type="entry name" value="ABC_transporter-like_CS"/>
</dbReference>
<dbReference type="InterPro" id="IPR008995">
    <property type="entry name" value="Mo/tungstate-bd_C_term_dom"/>
</dbReference>
<dbReference type="InterPro" id="IPR027417">
    <property type="entry name" value="P-loop_NTPase"/>
</dbReference>
<dbReference type="InterPro" id="IPR005893">
    <property type="entry name" value="PotA-like"/>
</dbReference>
<dbReference type="InterPro" id="IPR017879">
    <property type="entry name" value="PotA_ATP-bd"/>
</dbReference>
<dbReference type="InterPro" id="IPR013611">
    <property type="entry name" value="Transp-assoc_OB_typ2"/>
</dbReference>
<dbReference type="NCBIfam" id="TIGR01187">
    <property type="entry name" value="potA"/>
    <property type="match status" value="1"/>
</dbReference>
<dbReference type="NCBIfam" id="NF006987">
    <property type="entry name" value="PRK09452.1"/>
    <property type="match status" value="1"/>
</dbReference>
<dbReference type="PANTHER" id="PTHR42781">
    <property type="entry name" value="SPERMIDINE/PUTRESCINE IMPORT ATP-BINDING PROTEIN POTA"/>
    <property type="match status" value="1"/>
</dbReference>
<dbReference type="PANTHER" id="PTHR42781:SF4">
    <property type="entry name" value="SPERMIDINE_PUTRESCINE IMPORT ATP-BINDING PROTEIN POTA"/>
    <property type="match status" value="1"/>
</dbReference>
<dbReference type="Pfam" id="PF00005">
    <property type="entry name" value="ABC_tran"/>
    <property type="match status" value="1"/>
</dbReference>
<dbReference type="Pfam" id="PF08402">
    <property type="entry name" value="TOBE_2"/>
    <property type="match status" value="1"/>
</dbReference>
<dbReference type="SMART" id="SM00382">
    <property type="entry name" value="AAA"/>
    <property type="match status" value="1"/>
</dbReference>
<dbReference type="SUPFAM" id="SSF50331">
    <property type="entry name" value="MOP-like"/>
    <property type="match status" value="1"/>
</dbReference>
<dbReference type="SUPFAM" id="SSF52540">
    <property type="entry name" value="P-loop containing nucleoside triphosphate hydrolases"/>
    <property type="match status" value="1"/>
</dbReference>
<dbReference type="PROSITE" id="PS00211">
    <property type="entry name" value="ABC_TRANSPORTER_1"/>
    <property type="match status" value="1"/>
</dbReference>
<dbReference type="PROSITE" id="PS50893">
    <property type="entry name" value="ABC_TRANSPORTER_2"/>
    <property type="match status" value="1"/>
</dbReference>
<dbReference type="PROSITE" id="PS51305">
    <property type="entry name" value="POTA"/>
    <property type="match status" value="1"/>
</dbReference>
<proteinExistence type="inferred from homology"/>
<protein>
    <recommendedName>
        <fullName evidence="1">Spermidine/putrescine import ATP-binding protein PotA</fullName>
        <ecNumber evidence="1">7.6.2.11</ecNumber>
    </recommendedName>
</protein>
<feature type="chain" id="PRO_0000286222" description="Spermidine/putrescine import ATP-binding protein PotA">
    <location>
        <begin position="1"/>
        <end position="371"/>
    </location>
</feature>
<feature type="domain" description="ABC transporter" evidence="1">
    <location>
        <begin position="10"/>
        <end position="240"/>
    </location>
</feature>
<feature type="binding site" evidence="1">
    <location>
        <begin position="42"/>
        <end position="49"/>
    </location>
    <ligand>
        <name>ATP</name>
        <dbReference type="ChEBI" id="CHEBI:30616"/>
    </ligand>
</feature>
<reference key="1">
    <citation type="submission" date="2003-06" db="EMBL/GenBank/DDBJ databases">
        <title>The complete genome sequence of Haemophilus ducreyi.</title>
        <authorList>
            <person name="Munson R.S. Jr."/>
            <person name="Ray W.C."/>
            <person name="Mahairas G."/>
            <person name="Sabo P."/>
            <person name="Mungur R."/>
            <person name="Johnson L."/>
            <person name="Nguyen D."/>
            <person name="Wang J."/>
            <person name="Forst C."/>
            <person name="Hood L."/>
        </authorList>
    </citation>
    <scope>NUCLEOTIDE SEQUENCE [LARGE SCALE GENOMIC DNA]</scope>
    <source>
        <strain>35000HP / ATCC 700724</strain>
    </source>
</reference>
<gene>
    <name evidence="1" type="primary">potA</name>
    <name type="ordered locus">HD_0572</name>
</gene>
<organism>
    <name type="scientific">Haemophilus ducreyi (strain 35000HP / ATCC 700724)</name>
    <dbReference type="NCBI Taxonomy" id="233412"/>
    <lineage>
        <taxon>Bacteria</taxon>
        <taxon>Pseudomonadati</taxon>
        <taxon>Pseudomonadota</taxon>
        <taxon>Gammaproteobacteria</taxon>
        <taxon>Pasteurellales</taxon>
        <taxon>Pasteurellaceae</taxon>
        <taxon>Haemophilus</taxon>
    </lineage>
</organism>
<accession>Q7VNG4</accession>
<keyword id="KW-0067">ATP-binding</keyword>
<keyword id="KW-0997">Cell inner membrane</keyword>
<keyword id="KW-1003">Cell membrane</keyword>
<keyword id="KW-0472">Membrane</keyword>
<keyword id="KW-0547">Nucleotide-binding</keyword>
<keyword id="KW-1185">Reference proteome</keyword>
<keyword id="KW-1278">Translocase</keyword>
<keyword id="KW-0813">Transport</keyword>
<evidence type="ECO:0000255" key="1">
    <source>
        <dbReference type="HAMAP-Rule" id="MF_01726"/>
    </source>
</evidence>
<comment type="function">
    <text evidence="1">Part of the ABC transporter complex PotABCD involved in spermidine/putrescine import. Responsible for energy coupling to the transport system.</text>
</comment>
<comment type="catalytic activity">
    <reaction evidence="1">
        <text>ATP + H2O + polyamine-[polyamine-binding protein]Side 1 = ADP + phosphate + polyamineSide 2 + [polyamine-binding protein]Side 1.</text>
        <dbReference type="EC" id="7.6.2.11"/>
    </reaction>
</comment>
<comment type="subunit">
    <text evidence="1">The complex is composed of two ATP-binding proteins (PotA), two transmembrane proteins (PotB and PotC) and a solute-binding protein (PotD).</text>
</comment>
<comment type="subcellular location">
    <subcellularLocation>
        <location evidence="1">Cell inner membrane</location>
        <topology evidence="1">Peripheral membrane protein</topology>
    </subcellularLocation>
</comment>
<comment type="similarity">
    <text evidence="1">Belongs to the ABC transporter superfamily. Spermidine/putrescine importer (TC 3.A.1.11.1) family.</text>
</comment>